<reference key="1">
    <citation type="journal article" date="2009" name="Appl. Environ. Microbiol.">
        <title>Genome analysis of the meat starter culture bacterium Staphylococcus carnosus TM300.</title>
        <authorList>
            <person name="Rosenstein R."/>
            <person name="Nerz C."/>
            <person name="Biswas L."/>
            <person name="Resch A."/>
            <person name="Raddatz G."/>
            <person name="Schuster S.C."/>
            <person name="Goetz F."/>
        </authorList>
    </citation>
    <scope>NUCLEOTIDE SEQUENCE [LARGE SCALE GENOMIC DNA]</scope>
    <source>
        <strain>TM300</strain>
    </source>
</reference>
<comment type="function">
    <text evidence="1">Modulates transcription in response to changes in cellular NADH/NAD(+) redox state.</text>
</comment>
<comment type="subunit">
    <text evidence="1">Homodimer.</text>
</comment>
<comment type="subcellular location">
    <subcellularLocation>
        <location evidence="1">Cytoplasm</location>
    </subcellularLocation>
</comment>
<comment type="similarity">
    <text evidence="1">Belongs to the transcriptional regulatory Rex family.</text>
</comment>
<protein>
    <recommendedName>
        <fullName evidence="1">Redox-sensing transcriptional repressor Rex</fullName>
    </recommendedName>
</protein>
<evidence type="ECO:0000255" key="1">
    <source>
        <dbReference type="HAMAP-Rule" id="MF_01131"/>
    </source>
</evidence>
<proteinExistence type="inferred from homology"/>
<name>REX_STACT</name>
<gene>
    <name evidence="1" type="primary">rex</name>
    <name type="ordered locus">Sca_1553</name>
</gene>
<accession>B9DMK9</accession>
<organism>
    <name type="scientific">Staphylococcus carnosus (strain TM300)</name>
    <dbReference type="NCBI Taxonomy" id="396513"/>
    <lineage>
        <taxon>Bacteria</taxon>
        <taxon>Bacillati</taxon>
        <taxon>Bacillota</taxon>
        <taxon>Bacilli</taxon>
        <taxon>Bacillales</taxon>
        <taxon>Staphylococcaceae</taxon>
        <taxon>Staphylococcus</taxon>
    </lineage>
</organism>
<keyword id="KW-0963">Cytoplasm</keyword>
<keyword id="KW-0238">DNA-binding</keyword>
<keyword id="KW-0520">NAD</keyword>
<keyword id="KW-1185">Reference proteome</keyword>
<keyword id="KW-0678">Repressor</keyword>
<keyword id="KW-0804">Transcription</keyword>
<keyword id="KW-0805">Transcription regulation</keyword>
<sequence>MSNQKNNIPRATLKRLPLYYRLVNQLHEKGIDRVNSKTISEALDIDSASIRRDFSYFGELGKKGYGYNVESLLEFFKSKISESDTIKIGLVGVGNLGKALLSYNFSIHDEMVITEAFDIRDDIVGTKVGKVIVNKMEDLQSILKSAELDVVILTTPGSAAQEAADQIVDSGVKGILNFTPTRINVPDDVSVHQIDLGIELQSLLFFMNNLRNSN</sequence>
<dbReference type="EMBL" id="AM295250">
    <property type="protein sequence ID" value="CAL28458.1"/>
    <property type="molecule type" value="Genomic_DNA"/>
</dbReference>
<dbReference type="RefSeq" id="WP_015900798.1">
    <property type="nucleotide sequence ID" value="NC_012121.1"/>
</dbReference>
<dbReference type="SMR" id="B9DMK9"/>
<dbReference type="GeneID" id="93794003"/>
<dbReference type="KEGG" id="sca:SCA_1553"/>
<dbReference type="eggNOG" id="COG2344">
    <property type="taxonomic scope" value="Bacteria"/>
</dbReference>
<dbReference type="HOGENOM" id="CLU_061534_1_1_9"/>
<dbReference type="OrthoDB" id="9784760at2"/>
<dbReference type="BioCyc" id="SCAR396513:SCA_RS07870-MONOMER"/>
<dbReference type="Proteomes" id="UP000000444">
    <property type="component" value="Chromosome"/>
</dbReference>
<dbReference type="GO" id="GO:0005737">
    <property type="term" value="C:cytoplasm"/>
    <property type="evidence" value="ECO:0007669"/>
    <property type="project" value="UniProtKB-SubCell"/>
</dbReference>
<dbReference type="GO" id="GO:0003677">
    <property type="term" value="F:DNA binding"/>
    <property type="evidence" value="ECO:0007669"/>
    <property type="project" value="UniProtKB-UniRule"/>
</dbReference>
<dbReference type="GO" id="GO:0003700">
    <property type="term" value="F:DNA-binding transcription factor activity"/>
    <property type="evidence" value="ECO:0007669"/>
    <property type="project" value="UniProtKB-UniRule"/>
</dbReference>
<dbReference type="GO" id="GO:0045892">
    <property type="term" value="P:negative regulation of DNA-templated transcription"/>
    <property type="evidence" value="ECO:0007669"/>
    <property type="project" value="InterPro"/>
</dbReference>
<dbReference type="GO" id="GO:0051775">
    <property type="term" value="P:response to redox state"/>
    <property type="evidence" value="ECO:0007669"/>
    <property type="project" value="InterPro"/>
</dbReference>
<dbReference type="Gene3D" id="3.40.50.720">
    <property type="entry name" value="NAD(P)-binding Rossmann-like Domain"/>
    <property type="match status" value="1"/>
</dbReference>
<dbReference type="Gene3D" id="1.10.10.10">
    <property type="entry name" value="Winged helix-like DNA-binding domain superfamily/Winged helix DNA-binding domain"/>
    <property type="match status" value="1"/>
</dbReference>
<dbReference type="HAMAP" id="MF_01131">
    <property type="entry name" value="Rex"/>
    <property type="match status" value="1"/>
</dbReference>
<dbReference type="InterPro" id="IPR003781">
    <property type="entry name" value="CoA-bd"/>
</dbReference>
<dbReference type="InterPro" id="IPR036291">
    <property type="entry name" value="NAD(P)-bd_dom_sf"/>
</dbReference>
<dbReference type="InterPro" id="IPR009718">
    <property type="entry name" value="Rex_DNA-bd_C_dom"/>
</dbReference>
<dbReference type="InterPro" id="IPR022876">
    <property type="entry name" value="Tscrpt_rep_Rex"/>
</dbReference>
<dbReference type="InterPro" id="IPR036388">
    <property type="entry name" value="WH-like_DNA-bd_sf"/>
</dbReference>
<dbReference type="InterPro" id="IPR036390">
    <property type="entry name" value="WH_DNA-bd_sf"/>
</dbReference>
<dbReference type="NCBIfam" id="NF003989">
    <property type="entry name" value="PRK05472.1-3"/>
    <property type="match status" value="1"/>
</dbReference>
<dbReference type="NCBIfam" id="NF003991">
    <property type="entry name" value="PRK05472.1-5"/>
    <property type="match status" value="1"/>
</dbReference>
<dbReference type="NCBIfam" id="NF003994">
    <property type="entry name" value="PRK05472.2-3"/>
    <property type="match status" value="1"/>
</dbReference>
<dbReference type="NCBIfam" id="NF003995">
    <property type="entry name" value="PRK05472.2-4"/>
    <property type="match status" value="1"/>
</dbReference>
<dbReference type="NCBIfam" id="NF003996">
    <property type="entry name" value="PRK05472.2-5"/>
    <property type="match status" value="1"/>
</dbReference>
<dbReference type="PANTHER" id="PTHR35786">
    <property type="entry name" value="REDOX-SENSING TRANSCRIPTIONAL REPRESSOR REX"/>
    <property type="match status" value="1"/>
</dbReference>
<dbReference type="PANTHER" id="PTHR35786:SF1">
    <property type="entry name" value="REDOX-SENSING TRANSCRIPTIONAL REPRESSOR REX 1"/>
    <property type="match status" value="1"/>
</dbReference>
<dbReference type="Pfam" id="PF02629">
    <property type="entry name" value="CoA_binding"/>
    <property type="match status" value="1"/>
</dbReference>
<dbReference type="Pfam" id="PF06971">
    <property type="entry name" value="Put_DNA-bind_N"/>
    <property type="match status" value="1"/>
</dbReference>
<dbReference type="SMART" id="SM00881">
    <property type="entry name" value="CoA_binding"/>
    <property type="match status" value="1"/>
</dbReference>
<dbReference type="SUPFAM" id="SSF51735">
    <property type="entry name" value="NAD(P)-binding Rossmann-fold domains"/>
    <property type="match status" value="1"/>
</dbReference>
<dbReference type="SUPFAM" id="SSF46785">
    <property type="entry name" value="Winged helix' DNA-binding domain"/>
    <property type="match status" value="1"/>
</dbReference>
<feature type="chain" id="PRO_1000164084" description="Redox-sensing transcriptional repressor Rex">
    <location>
        <begin position="1"/>
        <end position="214"/>
    </location>
</feature>
<feature type="DNA-binding region" description="H-T-H motif" evidence="1">
    <location>
        <begin position="18"/>
        <end position="57"/>
    </location>
</feature>
<feature type="binding site" evidence="1">
    <location>
        <begin position="92"/>
        <end position="97"/>
    </location>
    <ligand>
        <name>NAD(+)</name>
        <dbReference type="ChEBI" id="CHEBI:57540"/>
    </ligand>
</feature>